<feature type="chain" id="PRO_0000306888" description="UPF0496 protein At3g28270">
    <location>
        <begin position="1"/>
        <end position="374"/>
    </location>
</feature>
<feature type="transmembrane region" description="Helical" evidence="1">
    <location>
        <begin position="214"/>
        <end position="234"/>
    </location>
</feature>
<feature type="transmembrane region" description="Helical" evidence="1">
    <location>
        <begin position="235"/>
        <end position="255"/>
    </location>
</feature>
<feature type="coiled-coil region" evidence="1">
    <location>
        <begin position="171"/>
        <end position="210"/>
    </location>
</feature>
<feature type="coiled-coil region" evidence="1">
    <location>
        <begin position="256"/>
        <end position="321"/>
    </location>
</feature>
<feature type="sequence conflict" description="In Ref. 4; AAN60266." evidence="2" ref="4">
    <original>K</original>
    <variation>E</variation>
    <location>
        <position position="5"/>
    </location>
</feature>
<feature type="sequence conflict" description="In Ref. 4; AAN60266." evidence="2" ref="4">
    <original>L</original>
    <variation>S</variation>
    <location>
        <position position="9"/>
    </location>
</feature>
<feature type="sequence conflict" description="In Ref. 4; AAN60266." evidence="2" ref="4">
    <location>
        <position position="16"/>
    </location>
</feature>
<feature type="sequence conflict" description="In Ref. 3; AAL16206." evidence="2" ref="3">
    <original>C</original>
    <variation>Y</variation>
    <location>
        <position position="23"/>
    </location>
</feature>
<feature type="sequence conflict" description="In Ref. 4; AAN60266/AAN60297." evidence="2" ref="4">
    <original>K</original>
    <variation>Q</variation>
    <location>
        <position position="28"/>
    </location>
</feature>
<feature type="sequence conflict" description="In Ref. 4; AAN60266/AAN60297." evidence="2" ref="4">
    <original>R</original>
    <variation>L</variation>
    <location>
        <position position="179"/>
    </location>
</feature>
<feature type="sequence conflict" description="In Ref. 4; AAN60266/AAN60297." evidence="2" ref="4">
    <original>R</original>
    <variation>K</variation>
    <location>
        <position position="195"/>
    </location>
</feature>
<feature type="sequence conflict" description="In Ref. 4; AAN60266/AAN60297." evidence="2" ref="4">
    <original>S</original>
    <variation>T</variation>
    <location>
        <position position="203"/>
    </location>
</feature>
<proteinExistence type="evidence at transcript level"/>
<dbReference type="EMBL" id="AP002051">
    <property type="protein sequence ID" value="BAB02617.1"/>
    <property type="molecule type" value="Genomic_DNA"/>
</dbReference>
<dbReference type="EMBL" id="CP002686">
    <property type="protein sequence ID" value="AEE77425.1"/>
    <property type="molecule type" value="Genomic_DNA"/>
</dbReference>
<dbReference type="EMBL" id="CP002686">
    <property type="protein sequence ID" value="AEE77426.1"/>
    <property type="molecule type" value="Genomic_DNA"/>
</dbReference>
<dbReference type="EMBL" id="AF428437">
    <property type="protein sequence ID" value="AAL16206.1"/>
    <property type="molecule type" value="mRNA"/>
</dbReference>
<dbReference type="EMBL" id="AY062740">
    <property type="protein sequence ID" value="AAL32818.1"/>
    <property type="molecule type" value="mRNA"/>
</dbReference>
<dbReference type="EMBL" id="AY128788">
    <property type="protein sequence ID" value="AAM91188.1"/>
    <property type="molecule type" value="mRNA"/>
</dbReference>
<dbReference type="EMBL" id="AF083707">
    <property type="protein sequence ID" value="AAN60266.1"/>
    <property type="molecule type" value="mRNA"/>
</dbReference>
<dbReference type="EMBL" id="AF083739">
    <property type="protein sequence ID" value="AAN60297.1"/>
    <property type="status" value="ALT_INIT"/>
    <property type="molecule type" value="mRNA"/>
</dbReference>
<dbReference type="RefSeq" id="NP_566836.1">
    <property type="nucleotide sequence ID" value="NM_113746.3"/>
</dbReference>
<dbReference type="RefSeq" id="NP_850644.1">
    <property type="nucleotide sequence ID" value="NM_180313.2"/>
</dbReference>
<dbReference type="SMR" id="Q9LHD9"/>
<dbReference type="BioGRID" id="7782">
    <property type="interactions" value="5"/>
</dbReference>
<dbReference type="FunCoup" id="Q9LHD9">
    <property type="interactions" value="1"/>
</dbReference>
<dbReference type="STRING" id="3702.Q9LHD9"/>
<dbReference type="iPTMnet" id="Q9LHD9"/>
<dbReference type="PaxDb" id="3702-AT3G28270.1"/>
<dbReference type="ProteomicsDB" id="228517"/>
<dbReference type="EnsemblPlants" id="AT3G28270.1">
    <property type="protein sequence ID" value="AT3G28270.1"/>
    <property type="gene ID" value="AT3G28270"/>
</dbReference>
<dbReference type="EnsemblPlants" id="AT3G28270.2">
    <property type="protein sequence ID" value="AT3G28270.2"/>
    <property type="gene ID" value="AT3G28270"/>
</dbReference>
<dbReference type="GeneID" id="822453"/>
<dbReference type="Gramene" id="AT3G28270.1">
    <property type="protein sequence ID" value="AT3G28270.1"/>
    <property type="gene ID" value="AT3G28270"/>
</dbReference>
<dbReference type="Gramene" id="AT3G28270.2">
    <property type="protein sequence ID" value="AT3G28270.2"/>
    <property type="gene ID" value="AT3G28270"/>
</dbReference>
<dbReference type="KEGG" id="ath:AT3G28270"/>
<dbReference type="Araport" id="AT3G28270"/>
<dbReference type="TAIR" id="AT3G28270">
    <property type="gene designation" value="AFL1"/>
</dbReference>
<dbReference type="eggNOG" id="ENOG502QQBT">
    <property type="taxonomic scope" value="Eukaryota"/>
</dbReference>
<dbReference type="HOGENOM" id="CLU_044778_1_0_1"/>
<dbReference type="InParanoid" id="Q9LHD9"/>
<dbReference type="OMA" id="HEDNEAA"/>
<dbReference type="PhylomeDB" id="Q9LHD9"/>
<dbReference type="PRO" id="PR:Q9LHD9"/>
<dbReference type="Proteomes" id="UP000006548">
    <property type="component" value="Chromosome 3"/>
</dbReference>
<dbReference type="ExpressionAtlas" id="Q9LHD9">
    <property type="expression patterns" value="baseline and differential"/>
</dbReference>
<dbReference type="GO" id="GO:0005829">
    <property type="term" value="C:cytosol"/>
    <property type="evidence" value="ECO:0007005"/>
    <property type="project" value="TAIR"/>
</dbReference>
<dbReference type="GO" id="GO:0031234">
    <property type="term" value="C:extrinsic component of cytoplasmic side of plasma membrane"/>
    <property type="evidence" value="ECO:0000314"/>
    <property type="project" value="TAIR"/>
</dbReference>
<dbReference type="GO" id="GO:0031313">
    <property type="term" value="C:extrinsic component of endosome membrane"/>
    <property type="evidence" value="ECO:0000314"/>
    <property type="project" value="TAIR"/>
</dbReference>
<dbReference type="GO" id="GO:0042631">
    <property type="term" value="P:cellular response to water deprivation"/>
    <property type="evidence" value="ECO:0000315"/>
    <property type="project" value="TAIR"/>
</dbReference>
<dbReference type="Gene3D" id="1.20.1170.10">
    <property type="match status" value="1"/>
</dbReference>
<dbReference type="InterPro" id="IPR007749">
    <property type="entry name" value="DUF677"/>
</dbReference>
<dbReference type="PANTHER" id="PTHR31113:SF13">
    <property type="entry name" value="(RAPE) HYPOTHETICAL PROTEIN"/>
    <property type="match status" value="1"/>
</dbReference>
<dbReference type="PANTHER" id="PTHR31113">
    <property type="entry name" value="UPF0496 PROTEIN 3-RELATED"/>
    <property type="match status" value="1"/>
</dbReference>
<dbReference type="Pfam" id="PF05055">
    <property type="entry name" value="DUF677"/>
    <property type="match status" value="1"/>
</dbReference>
<protein>
    <recommendedName>
        <fullName>UPF0496 protein At3g28270</fullName>
    </recommendedName>
</protein>
<name>U496C_ARATH</name>
<comment type="subcellular location">
    <subcellularLocation>
        <location evidence="2">Membrane</location>
        <topology evidence="2">Multi-pass membrane protein</topology>
    </subcellularLocation>
</comment>
<comment type="similarity">
    <text evidence="2">Belongs to the UPF0496 family.</text>
</comment>
<comment type="sequence caution" evidence="2">
    <conflict type="erroneous initiation">
        <sequence resource="EMBL-CDS" id="AAN60297"/>
    </conflict>
</comment>
<evidence type="ECO:0000255" key="1"/>
<evidence type="ECO:0000305" key="2"/>
<sequence length="374" mass="41613">MALSKDLMLKCSEDMMSAYKSACEEHPKLKSFDASLQQRTNKMIDSLTVEDKNGSSSPHDAHMELSKHLVEVTQGVADFITEIEDDVWDNQALKYLVLAYFENTKKTLEIFKTIENCVENAEMGQLLIREALAEFEKESAEKDVGGKKKKYEKTLEDLKSFKEMGDPFDGKVLTTQFERIKKQQESLLEEVSETRKKIQDEISNLEKKTLITNVVFGAAFAIVAVASIALIATGVGAAAGFGALAAPLLAAGWAGVYTTLDKKKDALNKQLEGLKKVEEIEESVEKGIKTNEEATETVSILVDGLEDRIKNMLKLVDNAIDHEDNEAATRIVLTQISKKVEKLTKKITEVGESVEDHSKLIAKARLQVLQKINR</sequence>
<gene>
    <name type="ordered locus">At3g28270</name>
    <name type="ORF">MZF16.5</name>
</gene>
<reference key="1">
    <citation type="journal article" date="2000" name="DNA Res.">
        <title>Structural analysis of Arabidopsis thaliana chromosome 3. II. Sequence features of the 4,251,695 bp regions covered by 90 P1, TAC and BAC clones.</title>
        <authorList>
            <person name="Kaneko T."/>
            <person name="Katoh T."/>
            <person name="Sato S."/>
            <person name="Nakamura Y."/>
            <person name="Asamizu E."/>
            <person name="Tabata S."/>
        </authorList>
    </citation>
    <scope>NUCLEOTIDE SEQUENCE [LARGE SCALE GENOMIC DNA]</scope>
    <source>
        <strain>cv. Columbia</strain>
    </source>
</reference>
<reference key="2">
    <citation type="journal article" date="2017" name="Plant J.">
        <title>Araport11: a complete reannotation of the Arabidopsis thaliana reference genome.</title>
        <authorList>
            <person name="Cheng C.Y."/>
            <person name="Krishnakumar V."/>
            <person name="Chan A.P."/>
            <person name="Thibaud-Nissen F."/>
            <person name="Schobel S."/>
            <person name="Town C.D."/>
        </authorList>
    </citation>
    <scope>GENOME REANNOTATION</scope>
    <source>
        <strain>cv. Columbia</strain>
    </source>
</reference>
<reference key="3">
    <citation type="journal article" date="2003" name="Science">
        <title>Empirical analysis of transcriptional activity in the Arabidopsis genome.</title>
        <authorList>
            <person name="Yamada K."/>
            <person name="Lim J."/>
            <person name="Dale J.M."/>
            <person name="Chen H."/>
            <person name="Shinn P."/>
            <person name="Palm C.J."/>
            <person name="Southwick A.M."/>
            <person name="Wu H.C."/>
            <person name="Kim C.J."/>
            <person name="Nguyen M."/>
            <person name="Pham P.K."/>
            <person name="Cheuk R.F."/>
            <person name="Karlin-Newmann G."/>
            <person name="Liu S.X."/>
            <person name="Lam B."/>
            <person name="Sakano H."/>
            <person name="Wu T."/>
            <person name="Yu G."/>
            <person name="Miranda M."/>
            <person name="Quach H.L."/>
            <person name="Tripp M."/>
            <person name="Chang C.H."/>
            <person name="Lee J.M."/>
            <person name="Toriumi M.J."/>
            <person name="Chan M.M."/>
            <person name="Tang C.C."/>
            <person name="Onodera C.S."/>
            <person name="Deng J.M."/>
            <person name="Akiyama K."/>
            <person name="Ansari Y."/>
            <person name="Arakawa T."/>
            <person name="Banh J."/>
            <person name="Banno F."/>
            <person name="Bowser L."/>
            <person name="Brooks S.Y."/>
            <person name="Carninci P."/>
            <person name="Chao Q."/>
            <person name="Choy N."/>
            <person name="Enju A."/>
            <person name="Goldsmith A.D."/>
            <person name="Gurjal M."/>
            <person name="Hansen N.F."/>
            <person name="Hayashizaki Y."/>
            <person name="Johnson-Hopson C."/>
            <person name="Hsuan V.W."/>
            <person name="Iida K."/>
            <person name="Karnes M."/>
            <person name="Khan S."/>
            <person name="Koesema E."/>
            <person name="Ishida J."/>
            <person name="Jiang P.X."/>
            <person name="Jones T."/>
            <person name="Kawai J."/>
            <person name="Kamiya A."/>
            <person name="Meyers C."/>
            <person name="Nakajima M."/>
            <person name="Narusaka M."/>
            <person name="Seki M."/>
            <person name="Sakurai T."/>
            <person name="Satou M."/>
            <person name="Tamse R."/>
            <person name="Vaysberg M."/>
            <person name="Wallender E.K."/>
            <person name="Wong C."/>
            <person name="Yamamura Y."/>
            <person name="Yuan S."/>
            <person name="Shinozaki K."/>
            <person name="Davis R.W."/>
            <person name="Theologis A."/>
            <person name="Ecker J.R."/>
        </authorList>
    </citation>
    <scope>NUCLEOTIDE SEQUENCE [LARGE SCALE MRNA]</scope>
    <source>
        <strain>cv. Columbia</strain>
    </source>
</reference>
<reference key="4">
    <citation type="submission" date="1998-08" db="EMBL/GenBank/DDBJ databases">
        <title>Signal peptide selection derived cDNAs from Arabidopsis thaliana leaves and guard cells.</title>
        <authorList>
            <person name="Stracke R."/>
            <person name="Palme K."/>
        </authorList>
    </citation>
    <scope>NUCLEOTIDE SEQUENCE [LARGE SCALE MRNA] OF 1-327 AND 27-374</scope>
</reference>
<keyword id="KW-0175">Coiled coil</keyword>
<keyword id="KW-0472">Membrane</keyword>
<keyword id="KW-1185">Reference proteome</keyword>
<keyword id="KW-0812">Transmembrane</keyword>
<keyword id="KW-1133">Transmembrane helix</keyword>
<organism>
    <name type="scientific">Arabidopsis thaliana</name>
    <name type="common">Mouse-ear cress</name>
    <dbReference type="NCBI Taxonomy" id="3702"/>
    <lineage>
        <taxon>Eukaryota</taxon>
        <taxon>Viridiplantae</taxon>
        <taxon>Streptophyta</taxon>
        <taxon>Embryophyta</taxon>
        <taxon>Tracheophyta</taxon>
        <taxon>Spermatophyta</taxon>
        <taxon>Magnoliopsida</taxon>
        <taxon>eudicotyledons</taxon>
        <taxon>Gunneridae</taxon>
        <taxon>Pentapetalae</taxon>
        <taxon>rosids</taxon>
        <taxon>malvids</taxon>
        <taxon>Brassicales</taxon>
        <taxon>Brassicaceae</taxon>
        <taxon>Camelineae</taxon>
        <taxon>Arabidopsis</taxon>
    </lineage>
</organism>
<accession>Q9LHD9</accession>
<accession>Q8H7D0</accession>
<accession>Q8H7E9</accession>
<accession>Q944H3</accession>